<reference key="1">
    <citation type="submission" date="2005-09" db="EMBL/GenBank/DDBJ databases">
        <authorList>
            <consortium name="NIH - Mammalian Gene Collection (MGC) project"/>
        </authorList>
    </citation>
    <scope>NUCLEOTIDE SEQUENCE [LARGE SCALE MRNA]</scope>
    <source>
        <strain>Hereford</strain>
        <tissue>Uterus</tissue>
    </source>
</reference>
<accession>Q3SX22</accession>
<sequence length="461" mass="50343">MEPGGDGAEDDVGAGIGPPAPGWCLRGRCRVGSQREDVGWWRSWLQQSYQAVKEKSSEALEFMKRDLTEFTQVVQRDTACTIAATASVVKEKLTTEGSSGATEKMKKGLSDFLGVISDTFAPSPDKTIDCDVITLMGTPSGTAEPYDGTKARLYSLQSDPATYCNEPDGPPELFDAWLSQFCLEEKKGEISELLVGSPSIRALYTKMVPAAVSHSEFWHRYFYKVHQLEQEQARRDALKQRAEQSISEEPGWEEEEEELAGVSPTSLKEAKVPVARPSTSPEGGPGPQSPCEENLVTPVEPPTEVTPSESSESVSLVTQIAKPPPASEAPALPKDLSQKLLEASLEEQDLAVDTGETGPPPRAQSKPHTPACRPSGPEPRPPARVETLREEILTDLRVFELNSDSGKSTPSNNGKKGSSTDISEDWEKDFDLDMTEEEVQMALSKVDASGELEDVEWEDWD</sequence>
<organism>
    <name type="scientific">Bos taurus</name>
    <name type="common">Bovine</name>
    <dbReference type="NCBI Taxonomy" id="9913"/>
    <lineage>
        <taxon>Eukaryota</taxon>
        <taxon>Metazoa</taxon>
        <taxon>Chordata</taxon>
        <taxon>Craniata</taxon>
        <taxon>Vertebrata</taxon>
        <taxon>Euteleostomi</taxon>
        <taxon>Mammalia</taxon>
        <taxon>Eutheria</taxon>
        <taxon>Laurasiatheria</taxon>
        <taxon>Artiodactyla</taxon>
        <taxon>Ruminantia</taxon>
        <taxon>Pecora</taxon>
        <taxon>Bovidae</taxon>
        <taxon>Bovinae</taxon>
        <taxon>Bos</taxon>
    </lineage>
</organism>
<protein>
    <recommendedName>
        <fullName>BSD domain-containing protein 1</fullName>
    </recommendedName>
</protein>
<proteinExistence type="evidence at transcript level"/>
<evidence type="ECO:0000250" key="1">
    <source>
        <dbReference type="UniProtKB" id="Q9NW68"/>
    </source>
</evidence>
<evidence type="ECO:0000255" key="2">
    <source>
        <dbReference type="PROSITE-ProRule" id="PRU00036"/>
    </source>
</evidence>
<evidence type="ECO:0000256" key="3">
    <source>
        <dbReference type="SAM" id="MobiDB-lite"/>
    </source>
</evidence>
<feature type="chain" id="PRO_0000282638" description="BSD domain-containing protein 1">
    <location>
        <begin position="1"/>
        <end position="461"/>
    </location>
</feature>
<feature type="domain" description="BSD" evidence="2">
    <location>
        <begin position="177"/>
        <end position="229"/>
    </location>
</feature>
<feature type="region of interest" description="Disordered" evidence="3">
    <location>
        <begin position="239"/>
        <end position="384"/>
    </location>
</feature>
<feature type="region of interest" description="Disordered" evidence="3">
    <location>
        <begin position="398"/>
        <end position="430"/>
    </location>
</feature>
<feature type="compositionally biased region" description="Acidic residues" evidence="3">
    <location>
        <begin position="250"/>
        <end position="259"/>
    </location>
</feature>
<feature type="compositionally biased region" description="Low complexity" evidence="3">
    <location>
        <begin position="295"/>
        <end position="318"/>
    </location>
</feature>
<feature type="compositionally biased region" description="Polar residues" evidence="3">
    <location>
        <begin position="402"/>
        <end position="421"/>
    </location>
</feature>
<feature type="modified residue" description="Phosphoserine" evidence="1">
    <location>
        <position position="123"/>
    </location>
</feature>
<feature type="modified residue" description="Phosphoserine" evidence="1">
    <location>
        <position position="197"/>
    </location>
</feature>
<feature type="modified residue" description="Phosphothreonine" evidence="1">
    <location>
        <position position="387"/>
    </location>
</feature>
<feature type="modified residue" description="Phosphoserine" evidence="1">
    <location>
        <position position="418"/>
    </location>
</feature>
<feature type="modified residue" description="Phosphoserine" evidence="1">
    <location>
        <position position="419"/>
    </location>
</feature>
<feature type="modified residue" description="Phosphoserine" evidence="1">
    <location>
        <position position="449"/>
    </location>
</feature>
<name>BSDC1_BOVIN</name>
<keyword id="KW-0597">Phosphoprotein</keyword>
<keyword id="KW-1185">Reference proteome</keyword>
<gene>
    <name type="primary">BSDC1</name>
</gene>
<dbReference type="EMBL" id="BC104548">
    <property type="protein sequence ID" value="AAI04549.1"/>
    <property type="molecule type" value="mRNA"/>
</dbReference>
<dbReference type="RefSeq" id="NP_001030198.1">
    <property type="nucleotide sequence ID" value="NM_001035026.1"/>
</dbReference>
<dbReference type="RefSeq" id="NP_001240651.1">
    <property type="nucleotide sequence ID" value="NM_001253722.1"/>
</dbReference>
<dbReference type="FunCoup" id="Q3SX22">
    <property type="interactions" value="2521"/>
</dbReference>
<dbReference type="STRING" id="9913.ENSBTAP00000066383"/>
<dbReference type="PaxDb" id="9913-ENSBTAP00000027526"/>
<dbReference type="GeneID" id="505545"/>
<dbReference type="KEGG" id="bta:505545"/>
<dbReference type="CTD" id="55108"/>
<dbReference type="eggNOG" id="KOG2690">
    <property type="taxonomic scope" value="Eukaryota"/>
</dbReference>
<dbReference type="HOGENOM" id="CLU_053864_0_0_1"/>
<dbReference type="InParanoid" id="Q3SX22"/>
<dbReference type="OrthoDB" id="73788at2759"/>
<dbReference type="TreeFam" id="TF313210"/>
<dbReference type="Proteomes" id="UP000009136">
    <property type="component" value="Unplaced"/>
</dbReference>
<dbReference type="GO" id="GO:0005737">
    <property type="term" value="C:cytoplasm"/>
    <property type="evidence" value="ECO:0000318"/>
    <property type="project" value="GO_Central"/>
</dbReference>
<dbReference type="Gene3D" id="1.10.3970.10">
    <property type="entry name" value="BSD domain"/>
    <property type="match status" value="1"/>
</dbReference>
<dbReference type="InterPro" id="IPR005607">
    <property type="entry name" value="BSD_dom"/>
</dbReference>
<dbReference type="InterPro" id="IPR035925">
    <property type="entry name" value="BSD_dom_sf"/>
</dbReference>
<dbReference type="InterPro" id="IPR051494">
    <property type="entry name" value="BSD_domain-containing"/>
</dbReference>
<dbReference type="PANTHER" id="PTHR16019:SF5">
    <property type="entry name" value="BSD DOMAIN-CONTAINING PROTEIN 1"/>
    <property type="match status" value="1"/>
</dbReference>
<dbReference type="PANTHER" id="PTHR16019">
    <property type="entry name" value="SYNAPSE-ASSOCIATED PROTEIN"/>
    <property type="match status" value="1"/>
</dbReference>
<dbReference type="Pfam" id="PF03909">
    <property type="entry name" value="BSD"/>
    <property type="match status" value="1"/>
</dbReference>
<dbReference type="SMART" id="SM00751">
    <property type="entry name" value="BSD"/>
    <property type="match status" value="1"/>
</dbReference>
<dbReference type="SUPFAM" id="SSF140383">
    <property type="entry name" value="BSD domain-like"/>
    <property type="match status" value="1"/>
</dbReference>
<dbReference type="PROSITE" id="PS50858">
    <property type="entry name" value="BSD"/>
    <property type="match status" value="1"/>
</dbReference>